<sequence>MTTQPPQDQTSTTPSLPPHLDPTTYPRTLTSATHNIHLELTYSTLNPTVALEHTSSPAAGANVLFLGTTRNTFEGRAVSQLSYTSYPPLALKSLMSIATRAAEKFDLKGVYIAHRLGVVPISEASIVVAVSAGHRGMAWKAGEEVLEEVKEKVEIWKREEFVDGGMEWRENRERDAEGRLLSSTEGGK</sequence>
<name>MOC2B_NEOFI</name>
<comment type="function">
    <text evidence="1">Catalytic subunit of the molybdopterin synthase complex, a complex that catalyzes the conversion of precursor Z into molybdopterin. Acts by mediating the incorporation of 2 sulfur atoms from thiocarboxylated MOCS2A into precursor Z to generate a dithiolene group.</text>
</comment>
<comment type="catalytic activity">
    <reaction evidence="1">
        <text>2 [molybdopterin-synthase sulfur-carrier protein]-C-terminal-Gly-aminoethanethioate + cyclic pyranopterin phosphate + H2O = molybdopterin + 2 [molybdopterin-synthase sulfur-carrier protein]-C-terminal Gly-Gly + 2 H(+)</text>
        <dbReference type="Rhea" id="RHEA:26333"/>
        <dbReference type="Rhea" id="RHEA-COMP:12202"/>
        <dbReference type="Rhea" id="RHEA-COMP:19907"/>
        <dbReference type="ChEBI" id="CHEBI:15377"/>
        <dbReference type="ChEBI" id="CHEBI:15378"/>
        <dbReference type="ChEBI" id="CHEBI:58698"/>
        <dbReference type="ChEBI" id="CHEBI:59648"/>
        <dbReference type="ChEBI" id="CHEBI:90778"/>
        <dbReference type="ChEBI" id="CHEBI:232372"/>
        <dbReference type="EC" id="2.8.1.12"/>
    </reaction>
</comment>
<comment type="pathway">
    <text evidence="1">Cofactor biosynthesis; molybdopterin biosynthesis.</text>
</comment>
<comment type="subunit">
    <text evidence="1">Heterotetramer; composed of 2 small (MOCS2A) and 2 large (MOCS2B) subunits.</text>
</comment>
<comment type="subcellular location">
    <subcellularLocation>
        <location evidence="1">Cytoplasm</location>
    </subcellularLocation>
</comment>
<comment type="similarity">
    <text evidence="1">Belongs to the MoaE family. MOCS2B subfamily.</text>
</comment>
<dbReference type="EC" id="2.8.1.12" evidence="1"/>
<dbReference type="EMBL" id="DS027690">
    <property type="protein sequence ID" value="EAW21818.1"/>
    <property type="molecule type" value="Genomic_DNA"/>
</dbReference>
<dbReference type="RefSeq" id="XP_001263715.1">
    <property type="nucleotide sequence ID" value="XM_001263714.1"/>
</dbReference>
<dbReference type="SMR" id="A1D7X4"/>
<dbReference type="STRING" id="331117.A1D7X4"/>
<dbReference type="EnsemblFungi" id="EAW21818">
    <property type="protein sequence ID" value="EAW21818"/>
    <property type="gene ID" value="NFIA_069890"/>
</dbReference>
<dbReference type="GeneID" id="4590361"/>
<dbReference type="KEGG" id="nfi:NFIA_069890"/>
<dbReference type="VEuPathDB" id="FungiDB:NFIA_069890"/>
<dbReference type="eggNOG" id="KOG3307">
    <property type="taxonomic scope" value="Eukaryota"/>
</dbReference>
<dbReference type="HOGENOM" id="CLU_089568_3_1_1"/>
<dbReference type="OMA" id="WKHQFFA"/>
<dbReference type="OrthoDB" id="5531344at2759"/>
<dbReference type="UniPathway" id="UPA00344"/>
<dbReference type="Proteomes" id="UP000006702">
    <property type="component" value="Unassembled WGS sequence"/>
</dbReference>
<dbReference type="GO" id="GO:1990140">
    <property type="term" value="C:molybdopterin synthase complex"/>
    <property type="evidence" value="ECO:0000250"/>
    <property type="project" value="UniProtKB"/>
</dbReference>
<dbReference type="GO" id="GO:0030366">
    <property type="term" value="F:molybdopterin synthase activity"/>
    <property type="evidence" value="ECO:0007669"/>
    <property type="project" value="UniProtKB-UniRule"/>
</dbReference>
<dbReference type="GO" id="GO:0006777">
    <property type="term" value="P:Mo-molybdopterin cofactor biosynthetic process"/>
    <property type="evidence" value="ECO:0000250"/>
    <property type="project" value="UniProtKB"/>
</dbReference>
<dbReference type="CDD" id="cd00756">
    <property type="entry name" value="MoaE"/>
    <property type="match status" value="1"/>
</dbReference>
<dbReference type="FunFam" id="3.90.1170.40:FF:000003">
    <property type="entry name" value="Molybdopterin converting factor subunit 2"/>
    <property type="match status" value="1"/>
</dbReference>
<dbReference type="Gene3D" id="3.90.1170.40">
    <property type="entry name" value="Molybdopterin biosynthesis MoaE subunit"/>
    <property type="match status" value="1"/>
</dbReference>
<dbReference type="HAMAP" id="MF_03052">
    <property type="entry name" value="MOC2B"/>
    <property type="match status" value="1"/>
</dbReference>
<dbReference type="InterPro" id="IPR036563">
    <property type="entry name" value="MoaE_sf"/>
</dbReference>
<dbReference type="InterPro" id="IPR028888">
    <property type="entry name" value="MOCS2B_euk"/>
</dbReference>
<dbReference type="InterPro" id="IPR003448">
    <property type="entry name" value="Mopterin_biosynth_MoaE"/>
</dbReference>
<dbReference type="PANTHER" id="PTHR23404">
    <property type="entry name" value="MOLYBDOPTERIN SYNTHASE RELATED"/>
    <property type="match status" value="1"/>
</dbReference>
<dbReference type="Pfam" id="PF02391">
    <property type="entry name" value="MoaE"/>
    <property type="match status" value="1"/>
</dbReference>
<dbReference type="SUPFAM" id="SSF54690">
    <property type="entry name" value="Molybdopterin synthase subunit MoaE"/>
    <property type="match status" value="1"/>
</dbReference>
<keyword id="KW-0963">Cytoplasm</keyword>
<keyword id="KW-0501">Molybdenum cofactor biosynthesis</keyword>
<keyword id="KW-1185">Reference proteome</keyword>
<keyword id="KW-0808">Transferase</keyword>
<gene>
    <name evidence="1" type="primary">cnxH</name>
    <name type="ORF">NFIA_069890</name>
</gene>
<organism>
    <name type="scientific">Neosartorya fischeri (strain ATCC 1020 / DSM 3700 / CBS 544.65 / FGSC A1164 / JCM 1740 / NRRL 181 / WB 181)</name>
    <name type="common">Aspergillus fischerianus</name>
    <dbReference type="NCBI Taxonomy" id="331117"/>
    <lineage>
        <taxon>Eukaryota</taxon>
        <taxon>Fungi</taxon>
        <taxon>Dikarya</taxon>
        <taxon>Ascomycota</taxon>
        <taxon>Pezizomycotina</taxon>
        <taxon>Eurotiomycetes</taxon>
        <taxon>Eurotiomycetidae</taxon>
        <taxon>Eurotiales</taxon>
        <taxon>Aspergillaceae</taxon>
        <taxon>Aspergillus</taxon>
        <taxon>Aspergillus subgen. Fumigati</taxon>
    </lineage>
</organism>
<feature type="chain" id="PRO_0000369357" description="Molybdopterin synthase catalytic subunit">
    <location>
        <begin position="1"/>
        <end position="188"/>
    </location>
</feature>
<feature type="region of interest" description="Disordered" evidence="2">
    <location>
        <begin position="1"/>
        <end position="23"/>
    </location>
</feature>
<feature type="compositionally biased region" description="Low complexity" evidence="2">
    <location>
        <begin position="1"/>
        <end position="14"/>
    </location>
</feature>
<feature type="binding site" evidence="1">
    <location>
        <begin position="134"/>
        <end position="135"/>
    </location>
    <ligand>
        <name>substrate</name>
    </ligand>
</feature>
<feature type="binding site" evidence="1">
    <location>
        <position position="150"/>
    </location>
    <ligand>
        <name>substrate</name>
    </ligand>
</feature>
<feature type="binding site" evidence="1">
    <location>
        <begin position="157"/>
        <end position="159"/>
    </location>
    <ligand>
        <name>substrate</name>
    </ligand>
</feature>
<reference key="1">
    <citation type="journal article" date="2008" name="PLoS Genet.">
        <title>Genomic islands in the pathogenic filamentous fungus Aspergillus fumigatus.</title>
        <authorList>
            <person name="Fedorova N.D."/>
            <person name="Khaldi N."/>
            <person name="Joardar V.S."/>
            <person name="Maiti R."/>
            <person name="Amedeo P."/>
            <person name="Anderson M.J."/>
            <person name="Crabtree J."/>
            <person name="Silva J.C."/>
            <person name="Badger J.H."/>
            <person name="Albarraq A."/>
            <person name="Angiuoli S."/>
            <person name="Bussey H."/>
            <person name="Bowyer P."/>
            <person name="Cotty P.J."/>
            <person name="Dyer P.S."/>
            <person name="Egan A."/>
            <person name="Galens K."/>
            <person name="Fraser-Liggett C.M."/>
            <person name="Haas B.J."/>
            <person name="Inman J.M."/>
            <person name="Kent R."/>
            <person name="Lemieux S."/>
            <person name="Malavazi I."/>
            <person name="Orvis J."/>
            <person name="Roemer T."/>
            <person name="Ronning C.M."/>
            <person name="Sundaram J.P."/>
            <person name="Sutton G."/>
            <person name="Turner G."/>
            <person name="Venter J.C."/>
            <person name="White O.R."/>
            <person name="Whitty B.R."/>
            <person name="Youngman P."/>
            <person name="Wolfe K.H."/>
            <person name="Goldman G.H."/>
            <person name="Wortman J.R."/>
            <person name="Jiang B."/>
            <person name="Denning D.W."/>
            <person name="Nierman W.C."/>
        </authorList>
    </citation>
    <scope>NUCLEOTIDE SEQUENCE [LARGE SCALE GENOMIC DNA]</scope>
    <source>
        <strain>ATCC 1020 / DSM 3700 / CBS 544.65 / FGSC A1164 / JCM 1740 / NRRL 181 / WB 181</strain>
    </source>
</reference>
<protein>
    <recommendedName>
        <fullName evidence="1">Molybdopterin synthase catalytic subunit</fullName>
        <ecNumber evidence="1">2.8.1.12</ecNumber>
    </recommendedName>
    <alternativeName>
        <fullName evidence="1">Common component for nitrate reductase and xanthine dehydrogenase protein H</fullName>
    </alternativeName>
    <alternativeName>
        <fullName evidence="1">Molybdenum cofactor synthesis protein 2 large subunit</fullName>
    </alternativeName>
    <alternativeName>
        <fullName evidence="1">Molybdenum cofactor synthesis protein 2B</fullName>
        <shortName evidence="1">MOCS2B</shortName>
    </alternativeName>
</protein>
<evidence type="ECO:0000255" key="1">
    <source>
        <dbReference type="HAMAP-Rule" id="MF_03052"/>
    </source>
</evidence>
<evidence type="ECO:0000256" key="2">
    <source>
        <dbReference type="SAM" id="MobiDB-lite"/>
    </source>
</evidence>
<proteinExistence type="inferred from homology"/>
<accession>A1D7X4</accession>